<proteinExistence type="inferred from homology"/>
<protein>
    <recommendedName>
        <fullName evidence="1">Ribosomal RNA small subunit methyltransferase A</fullName>
        <ecNumber evidence="1">2.1.1.182</ecNumber>
    </recommendedName>
    <alternativeName>
        <fullName evidence="1">16S rRNA (adenine(1518)-N(6)/adenine(1519)-N(6))-dimethyltransferase</fullName>
    </alternativeName>
    <alternativeName>
        <fullName evidence="1">16S rRNA dimethyladenosine transferase</fullName>
    </alternativeName>
    <alternativeName>
        <fullName evidence="1">16S rRNA dimethylase</fullName>
    </alternativeName>
    <alternativeName>
        <fullName evidence="1">S-adenosylmethionine-6-N', N'-adenosyl(rRNA) dimethyltransferase</fullName>
    </alternativeName>
</protein>
<name>RSMA_ALIB4</name>
<reference key="1">
    <citation type="journal article" date="2007" name="PLoS ONE">
        <title>The complete genome sequence and analysis of the Epsilonproteobacterium Arcobacter butzleri.</title>
        <authorList>
            <person name="Miller W.G."/>
            <person name="Parker C.T."/>
            <person name="Rubenfield M."/>
            <person name="Mendz G.L."/>
            <person name="Woesten M.M.S.M."/>
            <person name="Ussery D.W."/>
            <person name="Stolz J.F."/>
            <person name="Binnewies T.T."/>
            <person name="Hallin P.F."/>
            <person name="Wang G."/>
            <person name="Malek J.A."/>
            <person name="Rogosin A."/>
            <person name="Stanker L.H."/>
            <person name="Mandrell R.E."/>
        </authorList>
    </citation>
    <scope>NUCLEOTIDE SEQUENCE [LARGE SCALE GENOMIC DNA]</scope>
    <source>
        <strain>RM4018</strain>
    </source>
</reference>
<comment type="function">
    <text evidence="1">Specifically dimethylates two adjacent adenosines (A1518 and A1519) in the loop of a conserved hairpin near the 3'-end of 16S rRNA in the 30S particle. May play a critical role in biogenesis of 30S subunits.</text>
</comment>
<comment type="catalytic activity">
    <reaction evidence="1">
        <text>adenosine(1518)/adenosine(1519) in 16S rRNA + 4 S-adenosyl-L-methionine = N(6)-dimethyladenosine(1518)/N(6)-dimethyladenosine(1519) in 16S rRNA + 4 S-adenosyl-L-homocysteine + 4 H(+)</text>
        <dbReference type="Rhea" id="RHEA:19609"/>
        <dbReference type="Rhea" id="RHEA-COMP:10232"/>
        <dbReference type="Rhea" id="RHEA-COMP:10233"/>
        <dbReference type="ChEBI" id="CHEBI:15378"/>
        <dbReference type="ChEBI" id="CHEBI:57856"/>
        <dbReference type="ChEBI" id="CHEBI:59789"/>
        <dbReference type="ChEBI" id="CHEBI:74411"/>
        <dbReference type="ChEBI" id="CHEBI:74493"/>
        <dbReference type="EC" id="2.1.1.182"/>
    </reaction>
</comment>
<comment type="subcellular location">
    <subcellularLocation>
        <location evidence="1">Cytoplasm</location>
    </subcellularLocation>
</comment>
<comment type="similarity">
    <text evidence="1">Belongs to the class I-like SAM-binding methyltransferase superfamily. rRNA adenine N(6)-methyltransferase family. RsmA subfamily.</text>
</comment>
<gene>
    <name evidence="1" type="primary">rsmA</name>
    <name evidence="1" type="synonym">ksgA</name>
    <name type="ordered locus">Abu_0053</name>
</gene>
<organism>
    <name type="scientific">Aliarcobacter butzleri (strain RM4018)</name>
    <name type="common">Arcobacter butzleri</name>
    <dbReference type="NCBI Taxonomy" id="367737"/>
    <lineage>
        <taxon>Bacteria</taxon>
        <taxon>Pseudomonadati</taxon>
        <taxon>Campylobacterota</taxon>
        <taxon>Epsilonproteobacteria</taxon>
        <taxon>Campylobacterales</taxon>
        <taxon>Arcobacteraceae</taxon>
        <taxon>Aliarcobacter</taxon>
    </lineage>
</organism>
<keyword id="KW-0963">Cytoplasm</keyword>
<keyword id="KW-0489">Methyltransferase</keyword>
<keyword id="KW-1185">Reference proteome</keyword>
<keyword id="KW-0694">RNA-binding</keyword>
<keyword id="KW-0698">rRNA processing</keyword>
<keyword id="KW-0949">S-adenosyl-L-methionine</keyword>
<keyword id="KW-0808">Transferase</keyword>
<dbReference type="EC" id="2.1.1.182" evidence="1"/>
<dbReference type="EMBL" id="CP000361">
    <property type="protein sequence ID" value="ABV66338.1"/>
    <property type="molecule type" value="Genomic_DNA"/>
</dbReference>
<dbReference type="RefSeq" id="WP_004510094.1">
    <property type="nucleotide sequence ID" value="NC_009850.1"/>
</dbReference>
<dbReference type="SMR" id="A8EQW4"/>
<dbReference type="STRING" id="367737.Abu_0053"/>
<dbReference type="GeneID" id="24305483"/>
<dbReference type="KEGG" id="abu:Abu_0053"/>
<dbReference type="eggNOG" id="COG0030">
    <property type="taxonomic scope" value="Bacteria"/>
</dbReference>
<dbReference type="HOGENOM" id="CLU_041220_0_2_7"/>
<dbReference type="Proteomes" id="UP000001136">
    <property type="component" value="Chromosome"/>
</dbReference>
<dbReference type="GO" id="GO:0005829">
    <property type="term" value="C:cytosol"/>
    <property type="evidence" value="ECO:0007669"/>
    <property type="project" value="TreeGrafter"/>
</dbReference>
<dbReference type="GO" id="GO:0052908">
    <property type="term" value="F:16S rRNA (adenine(1518)-N(6)/adenine(1519)-N(6))-dimethyltransferase activity"/>
    <property type="evidence" value="ECO:0007669"/>
    <property type="project" value="UniProtKB-EC"/>
</dbReference>
<dbReference type="GO" id="GO:0003723">
    <property type="term" value="F:RNA binding"/>
    <property type="evidence" value="ECO:0007669"/>
    <property type="project" value="UniProtKB-KW"/>
</dbReference>
<dbReference type="Gene3D" id="1.10.8.100">
    <property type="entry name" value="Ribosomal RNA adenine dimethylase-like, domain 2"/>
    <property type="match status" value="1"/>
</dbReference>
<dbReference type="Gene3D" id="3.40.50.150">
    <property type="entry name" value="Vaccinia Virus protein VP39"/>
    <property type="match status" value="1"/>
</dbReference>
<dbReference type="HAMAP" id="MF_00607">
    <property type="entry name" value="16SrRNA_methyltr_A"/>
    <property type="match status" value="1"/>
</dbReference>
<dbReference type="InterPro" id="IPR001737">
    <property type="entry name" value="KsgA/Erm"/>
</dbReference>
<dbReference type="InterPro" id="IPR023165">
    <property type="entry name" value="rRNA_Ade_diMease-like_C"/>
</dbReference>
<dbReference type="InterPro" id="IPR020596">
    <property type="entry name" value="rRNA_Ade_Mease_Trfase_CS"/>
</dbReference>
<dbReference type="InterPro" id="IPR020598">
    <property type="entry name" value="rRNA_Ade_methylase_Trfase_N"/>
</dbReference>
<dbReference type="InterPro" id="IPR011530">
    <property type="entry name" value="rRNA_adenine_dimethylase"/>
</dbReference>
<dbReference type="InterPro" id="IPR029063">
    <property type="entry name" value="SAM-dependent_MTases_sf"/>
</dbReference>
<dbReference type="NCBIfam" id="TIGR00755">
    <property type="entry name" value="ksgA"/>
    <property type="match status" value="1"/>
</dbReference>
<dbReference type="PANTHER" id="PTHR11727">
    <property type="entry name" value="DIMETHYLADENOSINE TRANSFERASE"/>
    <property type="match status" value="1"/>
</dbReference>
<dbReference type="PANTHER" id="PTHR11727:SF7">
    <property type="entry name" value="DIMETHYLADENOSINE TRANSFERASE-RELATED"/>
    <property type="match status" value="1"/>
</dbReference>
<dbReference type="Pfam" id="PF00398">
    <property type="entry name" value="RrnaAD"/>
    <property type="match status" value="1"/>
</dbReference>
<dbReference type="SMART" id="SM00650">
    <property type="entry name" value="rADc"/>
    <property type="match status" value="1"/>
</dbReference>
<dbReference type="SUPFAM" id="SSF53335">
    <property type="entry name" value="S-adenosyl-L-methionine-dependent methyltransferases"/>
    <property type="match status" value="1"/>
</dbReference>
<dbReference type="PROSITE" id="PS01131">
    <property type="entry name" value="RRNA_A_DIMETH"/>
    <property type="match status" value="1"/>
</dbReference>
<dbReference type="PROSITE" id="PS51689">
    <property type="entry name" value="SAM_RNA_A_N6_MT"/>
    <property type="match status" value="1"/>
</dbReference>
<accession>A8EQW4</accession>
<sequence>MEKVKAKKQYGQNFLKDSTILDKIIQSMPNNNNHIVEIGPGLGDLTKNLVKYKDLTAYEVDTDLIGILKSKFAIEIEKGNLKLIHTDVLEAWDKLKNLHDGKYDLIANLPYYIATNIILRAFEDELCEHIIVMVQKEVAEKFTAKTNDKEYSSLGIITELISINSKILFDVPAEAFDPPPKVTSSILYIKKDMSKSLDKDFNKFLKACFIQPRKKLSKNLTTIFDKNIIFEIYKELNINDNVRPHEVSSSLYSQMYTKVKNGRNK</sequence>
<evidence type="ECO:0000255" key="1">
    <source>
        <dbReference type="HAMAP-Rule" id="MF_00607"/>
    </source>
</evidence>
<feature type="chain" id="PRO_1000061279" description="Ribosomal RNA small subunit methyltransferase A">
    <location>
        <begin position="1"/>
        <end position="265"/>
    </location>
</feature>
<feature type="binding site" evidence="1">
    <location>
        <position position="13"/>
    </location>
    <ligand>
        <name>S-adenosyl-L-methionine</name>
        <dbReference type="ChEBI" id="CHEBI:59789"/>
    </ligand>
</feature>
<feature type="binding site" evidence="1">
    <location>
        <position position="15"/>
    </location>
    <ligand>
        <name>S-adenosyl-L-methionine</name>
        <dbReference type="ChEBI" id="CHEBI:59789"/>
    </ligand>
</feature>
<feature type="binding site" evidence="1">
    <location>
        <position position="39"/>
    </location>
    <ligand>
        <name>S-adenosyl-L-methionine</name>
        <dbReference type="ChEBI" id="CHEBI:59789"/>
    </ligand>
</feature>
<feature type="binding site" evidence="1">
    <location>
        <position position="59"/>
    </location>
    <ligand>
        <name>S-adenosyl-L-methionine</name>
        <dbReference type="ChEBI" id="CHEBI:59789"/>
    </ligand>
</feature>
<feature type="binding site" evidence="1">
    <location>
        <position position="87"/>
    </location>
    <ligand>
        <name>S-adenosyl-L-methionine</name>
        <dbReference type="ChEBI" id="CHEBI:59789"/>
    </ligand>
</feature>
<feature type="binding site" evidence="1">
    <location>
        <position position="108"/>
    </location>
    <ligand>
        <name>S-adenosyl-L-methionine</name>
        <dbReference type="ChEBI" id="CHEBI:59789"/>
    </ligand>
</feature>